<gene>
    <name evidence="1" type="primary">pheS</name>
    <name type="ordered locus">Spy49_0596</name>
</gene>
<name>SYFA_STRPZ</name>
<evidence type="ECO:0000255" key="1">
    <source>
        <dbReference type="HAMAP-Rule" id="MF_00281"/>
    </source>
</evidence>
<reference key="1">
    <citation type="journal article" date="2008" name="J. Bacteriol.">
        <title>Genome sequence of a nephritogenic and highly transformable M49 strain of Streptococcus pyogenes.</title>
        <authorList>
            <person name="McShan W.M."/>
            <person name="Ferretti J.J."/>
            <person name="Karasawa T."/>
            <person name="Suvorov A.N."/>
            <person name="Lin S."/>
            <person name="Qin B."/>
            <person name="Jia H."/>
            <person name="Kenton S."/>
            <person name="Najar F."/>
            <person name="Wu H."/>
            <person name="Scott J."/>
            <person name="Roe B.A."/>
            <person name="Savic D.J."/>
        </authorList>
    </citation>
    <scope>NUCLEOTIDE SEQUENCE [LARGE SCALE GENOMIC DNA]</scope>
    <source>
        <strain>NZ131</strain>
    </source>
</reference>
<accession>B5XKQ6</accession>
<sequence length="347" mass="39193">MDLQAQLEELKTKTLETLQSLTGNHTKELQDLRVAVLGKKGSLTELLKGLKDLSNDLRPVVGKQVNEVRDLLTKAFEEQAKIVEAAKIQAQLDAESIDVTLPGRQMTLGHRHVLTQTSEEIEDIFLGMGFQIVDGFEVEKDYYNFERMNLPKDHPARDMQDTFYITEEILLRTHTSPVQARTLDQHDFSKGPLKMVSPGRVFRRDTDDATHSHQFHQIEGLVVGKNISMGDLKGTLEMIIKKMFGEERSIRLRPSYFPFTEPSVEVDVSCFKCGGKGCNVCKKTGWIEILGAGMVHPSVLEMSGVDAKEYSGFAFGLGQERIAMLRYGINDIRGFYQGDQRFSEQFN</sequence>
<keyword id="KW-0030">Aminoacyl-tRNA synthetase</keyword>
<keyword id="KW-0067">ATP-binding</keyword>
<keyword id="KW-0963">Cytoplasm</keyword>
<keyword id="KW-0436">Ligase</keyword>
<keyword id="KW-0460">Magnesium</keyword>
<keyword id="KW-0479">Metal-binding</keyword>
<keyword id="KW-0547">Nucleotide-binding</keyword>
<keyword id="KW-0648">Protein biosynthesis</keyword>
<proteinExistence type="inferred from homology"/>
<organism>
    <name type="scientific">Streptococcus pyogenes serotype M49 (strain NZ131)</name>
    <dbReference type="NCBI Taxonomy" id="471876"/>
    <lineage>
        <taxon>Bacteria</taxon>
        <taxon>Bacillati</taxon>
        <taxon>Bacillota</taxon>
        <taxon>Bacilli</taxon>
        <taxon>Lactobacillales</taxon>
        <taxon>Streptococcaceae</taxon>
        <taxon>Streptococcus</taxon>
    </lineage>
</organism>
<protein>
    <recommendedName>
        <fullName evidence="1">Phenylalanine--tRNA ligase alpha subunit</fullName>
        <ecNumber evidence="1">6.1.1.20</ecNumber>
    </recommendedName>
    <alternativeName>
        <fullName evidence="1">Phenylalanyl-tRNA synthetase alpha subunit</fullName>
        <shortName evidence="1">PheRS</shortName>
    </alternativeName>
</protein>
<comment type="catalytic activity">
    <reaction evidence="1">
        <text>tRNA(Phe) + L-phenylalanine + ATP = L-phenylalanyl-tRNA(Phe) + AMP + diphosphate + H(+)</text>
        <dbReference type="Rhea" id="RHEA:19413"/>
        <dbReference type="Rhea" id="RHEA-COMP:9668"/>
        <dbReference type="Rhea" id="RHEA-COMP:9699"/>
        <dbReference type="ChEBI" id="CHEBI:15378"/>
        <dbReference type="ChEBI" id="CHEBI:30616"/>
        <dbReference type="ChEBI" id="CHEBI:33019"/>
        <dbReference type="ChEBI" id="CHEBI:58095"/>
        <dbReference type="ChEBI" id="CHEBI:78442"/>
        <dbReference type="ChEBI" id="CHEBI:78531"/>
        <dbReference type="ChEBI" id="CHEBI:456215"/>
        <dbReference type="EC" id="6.1.1.20"/>
    </reaction>
</comment>
<comment type="cofactor">
    <cofactor evidence="1">
        <name>Mg(2+)</name>
        <dbReference type="ChEBI" id="CHEBI:18420"/>
    </cofactor>
    <text evidence="1">Binds 2 magnesium ions per tetramer.</text>
</comment>
<comment type="subunit">
    <text evidence="1">Tetramer of two alpha and two beta subunits.</text>
</comment>
<comment type="subcellular location">
    <subcellularLocation>
        <location evidence="1">Cytoplasm</location>
    </subcellularLocation>
</comment>
<comment type="similarity">
    <text evidence="1">Belongs to the class-II aminoacyl-tRNA synthetase family. Phe-tRNA synthetase alpha subunit type 1 subfamily.</text>
</comment>
<feature type="chain" id="PRO_1000114922" description="Phenylalanine--tRNA ligase alpha subunit">
    <location>
        <begin position="1"/>
        <end position="347"/>
    </location>
</feature>
<feature type="binding site" evidence="1">
    <location>
        <position position="261"/>
    </location>
    <ligand>
        <name>Mg(2+)</name>
        <dbReference type="ChEBI" id="CHEBI:18420"/>
        <note>shared with beta subunit</note>
    </ligand>
</feature>
<dbReference type="EC" id="6.1.1.20" evidence="1"/>
<dbReference type="EMBL" id="CP000829">
    <property type="protein sequence ID" value="ACI60918.1"/>
    <property type="molecule type" value="Genomic_DNA"/>
</dbReference>
<dbReference type="SMR" id="B5XKQ6"/>
<dbReference type="KEGG" id="soz:Spy49_0596"/>
<dbReference type="HOGENOM" id="CLU_025086_0_1_9"/>
<dbReference type="Proteomes" id="UP000001039">
    <property type="component" value="Chromosome"/>
</dbReference>
<dbReference type="GO" id="GO:0005737">
    <property type="term" value="C:cytoplasm"/>
    <property type="evidence" value="ECO:0007669"/>
    <property type="project" value="UniProtKB-SubCell"/>
</dbReference>
<dbReference type="GO" id="GO:0005524">
    <property type="term" value="F:ATP binding"/>
    <property type="evidence" value="ECO:0007669"/>
    <property type="project" value="UniProtKB-UniRule"/>
</dbReference>
<dbReference type="GO" id="GO:0140096">
    <property type="term" value="F:catalytic activity, acting on a protein"/>
    <property type="evidence" value="ECO:0007669"/>
    <property type="project" value="UniProtKB-ARBA"/>
</dbReference>
<dbReference type="GO" id="GO:0000287">
    <property type="term" value="F:magnesium ion binding"/>
    <property type="evidence" value="ECO:0007669"/>
    <property type="project" value="UniProtKB-UniRule"/>
</dbReference>
<dbReference type="GO" id="GO:0004826">
    <property type="term" value="F:phenylalanine-tRNA ligase activity"/>
    <property type="evidence" value="ECO:0007669"/>
    <property type="project" value="UniProtKB-UniRule"/>
</dbReference>
<dbReference type="GO" id="GO:0016740">
    <property type="term" value="F:transferase activity"/>
    <property type="evidence" value="ECO:0007669"/>
    <property type="project" value="UniProtKB-ARBA"/>
</dbReference>
<dbReference type="GO" id="GO:0000049">
    <property type="term" value="F:tRNA binding"/>
    <property type="evidence" value="ECO:0007669"/>
    <property type="project" value="InterPro"/>
</dbReference>
<dbReference type="GO" id="GO:0006432">
    <property type="term" value="P:phenylalanyl-tRNA aminoacylation"/>
    <property type="evidence" value="ECO:0007669"/>
    <property type="project" value="UniProtKB-UniRule"/>
</dbReference>
<dbReference type="CDD" id="cd00496">
    <property type="entry name" value="PheRS_alpha_core"/>
    <property type="match status" value="1"/>
</dbReference>
<dbReference type="FunFam" id="3.30.930.10:FF:000003">
    <property type="entry name" value="Phenylalanine--tRNA ligase alpha subunit"/>
    <property type="match status" value="1"/>
</dbReference>
<dbReference type="Gene3D" id="3.30.930.10">
    <property type="entry name" value="Bira Bifunctional Protein, Domain 2"/>
    <property type="match status" value="1"/>
</dbReference>
<dbReference type="HAMAP" id="MF_00281">
    <property type="entry name" value="Phe_tRNA_synth_alpha1"/>
    <property type="match status" value="1"/>
</dbReference>
<dbReference type="InterPro" id="IPR006195">
    <property type="entry name" value="aa-tRNA-synth_II"/>
</dbReference>
<dbReference type="InterPro" id="IPR045864">
    <property type="entry name" value="aa-tRNA-synth_II/BPL/LPL"/>
</dbReference>
<dbReference type="InterPro" id="IPR004529">
    <property type="entry name" value="Phe-tRNA-synth_IIc_asu"/>
</dbReference>
<dbReference type="InterPro" id="IPR004188">
    <property type="entry name" value="Phe-tRNA_ligase_II_N"/>
</dbReference>
<dbReference type="InterPro" id="IPR022911">
    <property type="entry name" value="Phe_tRNA_ligase_alpha1_bac"/>
</dbReference>
<dbReference type="InterPro" id="IPR002319">
    <property type="entry name" value="Phenylalanyl-tRNA_Synthase"/>
</dbReference>
<dbReference type="InterPro" id="IPR010978">
    <property type="entry name" value="tRNA-bd_arm"/>
</dbReference>
<dbReference type="NCBIfam" id="TIGR00468">
    <property type="entry name" value="pheS"/>
    <property type="match status" value="1"/>
</dbReference>
<dbReference type="PANTHER" id="PTHR11538:SF41">
    <property type="entry name" value="PHENYLALANINE--TRNA LIGASE, MITOCHONDRIAL"/>
    <property type="match status" value="1"/>
</dbReference>
<dbReference type="PANTHER" id="PTHR11538">
    <property type="entry name" value="PHENYLALANYL-TRNA SYNTHETASE"/>
    <property type="match status" value="1"/>
</dbReference>
<dbReference type="Pfam" id="PF02912">
    <property type="entry name" value="Phe_tRNA-synt_N"/>
    <property type="match status" value="1"/>
</dbReference>
<dbReference type="Pfam" id="PF01409">
    <property type="entry name" value="tRNA-synt_2d"/>
    <property type="match status" value="1"/>
</dbReference>
<dbReference type="SUPFAM" id="SSF55681">
    <property type="entry name" value="Class II aaRS and biotin synthetases"/>
    <property type="match status" value="1"/>
</dbReference>
<dbReference type="SUPFAM" id="SSF46589">
    <property type="entry name" value="tRNA-binding arm"/>
    <property type="match status" value="1"/>
</dbReference>
<dbReference type="PROSITE" id="PS50862">
    <property type="entry name" value="AA_TRNA_LIGASE_II"/>
    <property type="match status" value="1"/>
</dbReference>